<gene>
    <name type="primary">RPS26</name>
    <name type="ORF">QflA-11339</name>
</gene>
<comment type="function">
    <text evidence="2">Component of the small ribosomal subunit. The ribosome is a large ribonucleoprotein complex responsible for the synthesis of proteins in the cell.</text>
</comment>
<comment type="subunit">
    <text evidence="1">Component of the 40S small ribosomal subunit.</text>
</comment>
<comment type="subcellular location">
    <subcellularLocation>
        <location evidence="2">Cytoplasm</location>
        <location evidence="2">Cytosol</location>
    </subcellularLocation>
    <subcellularLocation>
        <location evidence="2">Cytoplasm</location>
    </subcellularLocation>
    <subcellularLocation>
        <location evidence="1">Rough endoplasmic reticulum</location>
    </subcellularLocation>
    <text evidence="1 2">Detected on cytosolic polysomes (By similarity). Detected in ribosomes that are associated with the rough endoplasmic reticulum (By similarity).</text>
</comment>
<comment type="similarity">
    <text evidence="4">Belongs to the eukaryotic ribosomal protein eS26 family.</text>
</comment>
<organism>
    <name type="scientific">Macaca fascicularis</name>
    <name type="common">Crab-eating macaque</name>
    <name type="synonym">Cynomolgus monkey</name>
    <dbReference type="NCBI Taxonomy" id="9541"/>
    <lineage>
        <taxon>Eukaryota</taxon>
        <taxon>Metazoa</taxon>
        <taxon>Chordata</taxon>
        <taxon>Craniata</taxon>
        <taxon>Vertebrata</taxon>
        <taxon>Euteleostomi</taxon>
        <taxon>Mammalia</taxon>
        <taxon>Eutheria</taxon>
        <taxon>Euarchontoglires</taxon>
        <taxon>Primates</taxon>
        <taxon>Haplorrhini</taxon>
        <taxon>Catarrhini</taxon>
        <taxon>Cercopithecidae</taxon>
        <taxon>Cercopithecinae</taxon>
        <taxon>Macaca</taxon>
    </lineage>
</organism>
<dbReference type="EMBL" id="AB093676">
    <property type="protein sequence ID" value="BAC21650.1"/>
    <property type="molecule type" value="mRNA"/>
</dbReference>
<dbReference type="RefSeq" id="XP_005553318.1">
    <property type="nucleotide sequence ID" value="XM_005553261.2"/>
</dbReference>
<dbReference type="RefSeq" id="XP_005571237.1">
    <property type="nucleotide sequence ID" value="XM_005571180.4"/>
</dbReference>
<dbReference type="PDB" id="7SYH">
    <property type="method" value="EM"/>
    <property type="resolution" value="4.60 A"/>
    <property type="chains" value="b=2-102"/>
</dbReference>
<dbReference type="PDBsum" id="7SYH"/>
<dbReference type="EMDB" id="EMD-25528"/>
<dbReference type="SMR" id="P61251"/>
<dbReference type="STRING" id="9541.ENSMFAP00000013137"/>
<dbReference type="Ensembl" id="ENSMFAT00000003046.2">
    <property type="protein sequence ID" value="ENSMFAP00000028855.1"/>
    <property type="gene ID" value="ENSMFAG00000041709.2"/>
</dbReference>
<dbReference type="Ensembl" id="ENSMFAT00000062147.2">
    <property type="protein sequence ID" value="ENSMFAP00000013137.1"/>
    <property type="gene ID" value="ENSMFAG00000028033.2"/>
</dbReference>
<dbReference type="GeneID" id="102115597"/>
<dbReference type="KEGG" id="mcf:102115597"/>
<dbReference type="KEGG" id="mcf:102139875"/>
<dbReference type="CTD" id="6231"/>
<dbReference type="VEuPathDB" id="HostDB:ENSMFAG00000028033"/>
<dbReference type="VEuPathDB" id="HostDB:ENSMFAG00000041709"/>
<dbReference type="eggNOG" id="KOG1768">
    <property type="taxonomic scope" value="Eukaryota"/>
</dbReference>
<dbReference type="GeneTree" id="ENSGT00390000002517"/>
<dbReference type="Proteomes" id="UP000233100">
    <property type="component" value="Chromosome 11"/>
</dbReference>
<dbReference type="Proteomes" id="UP000233100">
    <property type="component" value="Chromosome 4"/>
</dbReference>
<dbReference type="Bgee" id="ENSMFAG00000028033">
    <property type="expression patterns" value="Expressed in bone marrow and 13 other cell types or tissues"/>
</dbReference>
<dbReference type="GO" id="GO:0098556">
    <property type="term" value="C:cytoplasmic side of rough endoplasmic reticulum membrane"/>
    <property type="evidence" value="ECO:0000250"/>
    <property type="project" value="UniProtKB"/>
</dbReference>
<dbReference type="GO" id="GO:0022627">
    <property type="term" value="C:cytosolic small ribosomal subunit"/>
    <property type="evidence" value="ECO:0000250"/>
    <property type="project" value="UniProtKB"/>
</dbReference>
<dbReference type="GO" id="GO:0005840">
    <property type="term" value="C:ribosome"/>
    <property type="evidence" value="ECO:0000250"/>
    <property type="project" value="UniProtKB"/>
</dbReference>
<dbReference type="GO" id="GO:0003729">
    <property type="term" value="F:mRNA binding"/>
    <property type="evidence" value="ECO:0007669"/>
    <property type="project" value="TreeGrafter"/>
</dbReference>
<dbReference type="GO" id="GO:0003735">
    <property type="term" value="F:structural constituent of ribosome"/>
    <property type="evidence" value="ECO:0007669"/>
    <property type="project" value="InterPro"/>
</dbReference>
<dbReference type="GO" id="GO:0002181">
    <property type="term" value="P:cytoplasmic translation"/>
    <property type="evidence" value="ECO:0000250"/>
    <property type="project" value="UniProtKB"/>
</dbReference>
<dbReference type="FunFam" id="3.30.1740.20:FF:000001">
    <property type="entry name" value="40S ribosomal protein S26"/>
    <property type="match status" value="1"/>
</dbReference>
<dbReference type="Gene3D" id="3.30.1740.20">
    <property type="entry name" value="Ribosomal protein S26e"/>
    <property type="match status" value="1"/>
</dbReference>
<dbReference type="InterPro" id="IPR000892">
    <property type="entry name" value="Ribosomal_eS26"/>
</dbReference>
<dbReference type="InterPro" id="IPR047864">
    <property type="entry name" value="Ribosomal_eS26_CS"/>
</dbReference>
<dbReference type="InterPro" id="IPR038551">
    <property type="entry name" value="Ribosomal_eS26_sf"/>
</dbReference>
<dbReference type="PANTHER" id="PTHR12538">
    <property type="entry name" value="40S RIBOSOMAL PROTEIN S26"/>
    <property type="match status" value="1"/>
</dbReference>
<dbReference type="PANTHER" id="PTHR12538:SF7">
    <property type="entry name" value="SMALL RIBOSOMAL SUBUNIT PROTEIN ES26-RELATED"/>
    <property type="match status" value="1"/>
</dbReference>
<dbReference type="Pfam" id="PF01283">
    <property type="entry name" value="Ribosomal_S26e"/>
    <property type="match status" value="1"/>
</dbReference>
<dbReference type="PROSITE" id="PS00733">
    <property type="entry name" value="RIBOSOMAL_S26E"/>
    <property type="match status" value="1"/>
</dbReference>
<keyword id="KW-0002">3D-structure</keyword>
<keyword id="KW-0963">Cytoplasm</keyword>
<keyword id="KW-0256">Endoplasmic reticulum</keyword>
<keyword id="KW-0597">Phosphoprotein</keyword>
<keyword id="KW-1185">Reference proteome</keyword>
<keyword id="KW-0687">Ribonucleoprotein</keyword>
<keyword id="KW-0689">Ribosomal protein</keyword>
<sequence length="115" mass="13015">MTKKRRNNGRAKKGRGHVQPIRCTNCARCVPKDKAIKKFVIRNIVEAAAVRDISEASVFDAYVLPKLYVKLHYCVSCAIHSKVVRNRSREARKDRTPPPRFRPAGAAPRPPPKPM</sequence>
<evidence type="ECO:0000250" key="1">
    <source>
        <dbReference type="UniProtKB" id="P49171"/>
    </source>
</evidence>
<evidence type="ECO:0000250" key="2">
    <source>
        <dbReference type="UniProtKB" id="P62854"/>
    </source>
</evidence>
<evidence type="ECO:0000256" key="3">
    <source>
        <dbReference type="SAM" id="MobiDB-lite"/>
    </source>
</evidence>
<evidence type="ECO:0000305" key="4"/>
<accession>P61251</accession>
<protein>
    <recommendedName>
        <fullName evidence="4">Small ribosomal subunit protein eS26</fullName>
    </recommendedName>
    <alternativeName>
        <fullName>40S ribosomal protein S26</fullName>
    </alternativeName>
</protein>
<proteinExistence type="evidence at protein level"/>
<reference key="1">
    <citation type="journal article" date="2001" name="Gene">
        <title>Assignment of 118 novel cDNAs of cynomolgus monkey brain to human chromosomes.</title>
        <authorList>
            <person name="Osada N."/>
            <person name="Hida M."/>
            <person name="Kususda J."/>
            <person name="Tanuma R."/>
            <person name="Iseki K."/>
            <person name="Hirata M."/>
            <person name="Suto Y."/>
            <person name="Hirai M."/>
            <person name="Terao K."/>
            <person name="Suzuki Y."/>
            <person name="Sugano S."/>
            <person name="Hashimoto K."/>
        </authorList>
    </citation>
    <scope>NUCLEOTIDE SEQUENCE [LARGE SCALE MRNA]</scope>
    <source>
        <tissue>Frontal cortex</tissue>
    </source>
</reference>
<reference key="2">
    <citation type="journal article" date="2001" name="Gene">
        <authorList>
            <person name="Osada N."/>
            <person name="Hida M."/>
            <person name="Kusuda J."/>
            <person name="Tanuma R."/>
            <person name="Iseki K."/>
            <person name="Hirata M."/>
            <person name="Suto Y."/>
            <person name="Hirai M."/>
            <person name="Terao K."/>
            <person name="Suzuki Y."/>
            <person name="Sugano S."/>
            <person name="Hashimoto K."/>
            <person name="Kususda J."/>
        </authorList>
    </citation>
    <scope>ERRATUM OF PUBMED:11574149</scope>
</reference>
<name>RS26_MACFA</name>
<feature type="chain" id="PRO_0000204510" description="Small ribosomal subunit protein eS26">
    <location>
        <begin position="1"/>
        <end position="115"/>
    </location>
</feature>
<feature type="region of interest" description="Disordered" evidence="3">
    <location>
        <begin position="85"/>
        <end position="115"/>
    </location>
</feature>
<feature type="compositionally biased region" description="Basic and acidic residues" evidence="3">
    <location>
        <begin position="87"/>
        <end position="97"/>
    </location>
</feature>
<feature type="modified residue" description="Phosphoserine" evidence="2">
    <location>
        <position position="54"/>
    </location>
</feature>